<organism>
    <name type="scientific">Xenopus laevis</name>
    <name type="common">African clawed frog</name>
    <dbReference type="NCBI Taxonomy" id="8355"/>
    <lineage>
        <taxon>Eukaryota</taxon>
        <taxon>Metazoa</taxon>
        <taxon>Chordata</taxon>
        <taxon>Craniata</taxon>
        <taxon>Vertebrata</taxon>
        <taxon>Euteleostomi</taxon>
        <taxon>Amphibia</taxon>
        <taxon>Batrachia</taxon>
        <taxon>Anura</taxon>
        <taxon>Pipoidea</taxon>
        <taxon>Pipidae</taxon>
        <taxon>Xenopodinae</taxon>
        <taxon>Xenopus</taxon>
        <taxon>Xenopus</taxon>
    </lineage>
</organism>
<feature type="chain" id="PRO_0000355079" description="Protein inturned">
    <location>
        <begin position="1"/>
        <end position="951"/>
    </location>
</feature>
<feature type="domain" description="PDZ" evidence="3">
    <location>
        <begin position="187"/>
        <end position="269"/>
    </location>
</feature>
<feature type="region of interest" description="Disordered" evidence="4">
    <location>
        <begin position="1"/>
        <end position="32"/>
    </location>
</feature>
<feature type="region of interest" description="Disordered" evidence="4">
    <location>
        <begin position="189"/>
        <end position="208"/>
    </location>
</feature>
<feature type="region of interest" description="Disordered" evidence="4">
    <location>
        <begin position="687"/>
        <end position="765"/>
    </location>
</feature>
<feature type="compositionally biased region" description="Low complexity" evidence="4">
    <location>
        <begin position="715"/>
        <end position="726"/>
    </location>
</feature>
<feature type="compositionally biased region" description="Basic and acidic residues" evidence="4">
    <location>
        <begin position="743"/>
        <end position="752"/>
    </location>
</feature>
<feature type="compositionally biased region" description="Gly residues" evidence="4">
    <location>
        <begin position="754"/>
        <end position="765"/>
    </location>
</feature>
<keyword id="KW-1003">Cell membrane</keyword>
<keyword id="KW-0966">Cell projection</keyword>
<keyword id="KW-0970">Cilium biogenesis/degradation</keyword>
<keyword id="KW-0963">Cytoplasm</keyword>
<keyword id="KW-0206">Cytoskeleton</keyword>
<keyword id="KW-0217">Developmental protein</keyword>
<keyword id="KW-0472">Membrane</keyword>
<keyword id="KW-1185">Reference proteome</keyword>
<gene>
    <name evidence="2" type="primary">intu</name>
    <name evidence="8" type="synonym">in</name>
    <name evidence="10" type="synonym">int</name>
</gene>
<proteinExistence type="evidence at transcript level"/>
<protein>
    <recommendedName>
        <fullName>Protein inturned</fullName>
    </recommendedName>
    <alternativeName>
        <fullName evidence="8">Inturned planar cell polarity effector homolog</fullName>
        <shortName evidence="8">Xint</shortName>
    </alternativeName>
</protein>
<accession>Q2I0E5</accession>
<evidence type="ECO:0000250" key="1">
    <source>
        <dbReference type="UniProtKB" id="Q059U7"/>
    </source>
</evidence>
<evidence type="ECO:0000250" key="2">
    <source>
        <dbReference type="UniProtKB" id="Q9ULD6"/>
    </source>
</evidence>
<evidence type="ECO:0000255" key="3"/>
<evidence type="ECO:0000256" key="4">
    <source>
        <dbReference type="SAM" id="MobiDB-lite"/>
    </source>
</evidence>
<evidence type="ECO:0000269" key="5">
    <source>
    </source>
</evidence>
<evidence type="ECO:0000269" key="6">
    <source>
    </source>
</evidence>
<evidence type="ECO:0000269" key="7">
    <source>
    </source>
</evidence>
<evidence type="ECO:0000303" key="8">
    <source>
    </source>
</evidence>
<evidence type="ECO:0000305" key="9"/>
<evidence type="ECO:0000312" key="10">
    <source>
        <dbReference type="EMBL" id="ABC75872.1"/>
    </source>
</evidence>
<dbReference type="EMBL" id="DQ355992">
    <property type="protein sequence ID" value="ABC75872.1"/>
    <property type="molecule type" value="mRNA"/>
</dbReference>
<dbReference type="RefSeq" id="NP_001089157.1">
    <property type="nucleotide sequence ID" value="NM_001095688.1"/>
</dbReference>
<dbReference type="SMR" id="Q2I0E5"/>
<dbReference type="GeneID" id="734193"/>
<dbReference type="KEGG" id="xla:734193"/>
<dbReference type="AGR" id="Xenbase:XB-GENE-919877"/>
<dbReference type="CTD" id="734193"/>
<dbReference type="Xenbase" id="XB-GENE-919877">
    <property type="gene designation" value="intu.S"/>
</dbReference>
<dbReference type="OrthoDB" id="10038586at2759"/>
<dbReference type="Proteomes" id="UP000186698">
    <property type="component" value="Chromosome 1S"/>
</dbReference>
<dbReference type="Bgee" id="734193">
    <property type="expression patterns" value="Expressed in egg cell and 16 other cell types or tissues"/>
</dbReference>
<dbReference type="GO" id="GO:0045177">
    <property type="term" value="C:apical part of cell"/>
    <property type="evidence" value="ECO:0000314"/>
    <property type="project" value="UniProtKB"/>
</dbReference>
<dbReference type="GO" id="GO:0009986">
    <property type="term" value="C:cell surface"/>
    <property type="evidence" value="ECO:0000314"/>
    <property type="project" value="UniProtKB"/>
</dbReference>
<dbReference type="GO" id="GO:0036064">
    <property type="term" value="C:ciliary basal body"/>
    <property type="evidence" value="ECO:0000314"/>
    <property type="project" value="GO_Central"/>
</dbReference>
<dbReference type="GO" id="GO:0005929">
    <property type="term" value="C:cilium"/>
    <property type="evidence" value="ECO:0000318"/>
    <property type="project" value="GO_Central"/>
</dbReference>
<dbReference type="GO" id="GO:0005737">
    <property type="term" value="C:cytoplasm"/>
    <property type="evidence" value="ECO:0000318"/>
    <property type="project" value="GO_Central"/>
</dbReference>
<dbReference type="GO" id="GO:0005886">
    <property type="term" value="C:plasma membrane"/>
    <property type="evidence" value="ECO:0007669"/>
    <property type="project" value="UniProtKB-SubCell"/>
</dbReference>
<dbReference type="GO" id="GO:0032053">
    <property type="term" value="P:ciliary basal body organization"/>
    <property type="evidence" value="ECO:0000315"/>
    <property type="project" value="UniProtKB"/>
</dbReference>
<dbReference type="GO" id="GO:0060271">
    <property type="term" value="P:cilium assembly"/>
    <property type="evidence" value="ECO:0000315"/>
    <property type="project" value="UniProtKB"/>
</dbReference>
<dbReference type="GO" id="GO:0001736">
    <property type="term" value="P:establishment of planar polarity"/>
    <property type="evidence" value="ECO:0000315"/>
    <property type="project" value="UniProtKB"/>
</dbReference>
<dbReference type="GO" id="GO:0007399">
    <property type="term" value="P:nervous system development"/>
    <property type="evidence" value="ECO:0000318"/>
    <property type="project" value="GO_Central"/>
</dbReference>
<dbReference type="GO" id="GO:0008104">
    <property type="term" value="P:protein localization"/>
    <property type="evidence" value="ECO:0000315"/>
    <property type="project" value="UniProtKB"/>
</dbReference>
<dbReference type="GO" id="GO:0008589">
    <property type="term" value="P:regulation of smoothened signaling pathway"/>
    <property type="evidence" value="ECO:0000315"/>
    <property type="project" value="UniProtKB"/>
</dbReference>
<dbReference type="GO" id="GO:0016192">
    <property type="term" value="P:vesicle-mediated transport"/>
    <property type="evidence" value="ECO:0007669"/>
    <property type="project" value="InterPro"/>
</dbReference>
<dbReference type="FunFam" id="2.30.42.10:FF:000327">
    <property type="entry name" value="Protein inturned"/>
    <property type="match status" value="1"/>
</dbReference>
<dbReference type="Gene3D" id="2.30.42.10">
    <property type="match status" value="1"/>
</dbReference>
<dbReference type="InterPro" id="IPR043987">
    <property type="entry name" value="CCZ1/INTU/HSP4_longin_1"/>
</dbReference>
<dbReference type="InterPro" id="IPR043989">
    <property type="entry name" value="CCZ1/INTU/HSP4_longin_3"/>
</dbReference>
<dbReference type="InterPro" id="IPR043988">
    <property type="entry name" value="CCZ1/INTU_longin_2"/>
</dbReference>
<dbReference type="InterPro" id="IPR039151">
    <property type="entry name" value="INTU"/>
</dbReference>
<dbReference type="InterPro" id="IPR001478">
    <property type="entry name" value="PDZ"/>
</dbReference>
<dbReference type="InterPro" id="IPR036034">
    <property type="entry name" value="PDZ_sf"/>
</dbReference>
<dbReference type="PANTHER" id="PTHR21082">
    <property type="entry name" value="PROTEIN INTURNED"/>
    <property type="match status" value="1"/>
</dbReference>
<dbReference type="PANTHER" id="PTHR21082:SF4">
    <property type="entry name" value="PROTEIN INTURNED"/>
    <property type="match status" value="1"/>
</dbReference>
<dbReference type="Pfam" id="PF19031">
    <property type="entry name" value="Intu_longin_1"/>
    <property type="match status" value="1"/>
</dbReference>
<dbReference type="Pfam" id="PF19032">
    <property type="entry name" value="Intu_longin_2"/>
    <property type="match status" value="1"/>
</dbReference>
<dbReference type="Pfam" id="PF19033">
    <property type="entry name" value="Intu_longin_3"/>
    <property type="match status" value="1"/>
</dbReference>
<dbReference type="SMART" id="SM00228">
    <property type="entry name" value="PDZ"/>
    <property type="match status" value="1"/>
</dbReference>
<dbReference type="SUPFAM" id="SSF50156">
    <property type="entry name" value="PDZ domain-like"/>
    <property type="match status" value="1"/>
</dbReference>
<name>INTU_XENLA</name>
<comment type="function">
    <text evidence="5 6 7">Plays a role in the definition of cell polarity via the planar cell polarity (PCP) cascade. Required for ciliogenesis by controlling the organization of the apical actin cytoskeleton and the positioning of the basal bodies at the apical cell surface, which in turn is essential for the normal orientation of elongating ciliary microtubules. Proposed to function as core component of a functional module called CPLANE (ciliogenesis and planar polarity effectors) involved in recruitment of peripheral IFT-A proteins to basal bodies (PubMed:27158779). Controls the localization of both rhoa and disheveled in multi-ciliated cells. Has an indirect effect on hedgehog signaling.</text>
</comment>
<comment type="subunit">
    <text evidence="1">Interacts with fuz and wdpcp; fuz, intu and wdpcp probably form the core CPLANE (ciliogenesis and planar polarity effectors) complex.</text>
</comment>
<comment type="subcellular location">
    <subcellularLocation>
        <location evidence="5">Cell surface</location>
    </subcellularLocation>
    <subcellularLocation>
        <location evidence="5">Cell membrane</location>
    </subcellularLocation>
    <subcellularLocation>
        <location evidence="1">Cytoplasm</location>
    </subcellularLocation>
    <subcellularLocation>
        <location evidence="7">Cytoplasm</location>
        <location evidence="7">Cytoskeleton</location>
        <location evidence="7">Cilium basal body</location>
    </subcellularLocation>
    <text evidence="5">Enriched at the apical surface in ciliated cells. Localizes to the cell membrane in non-ciliated cells.</text>
</comment>
<comment type="tissue specificity">
    <text evidence="5">Expressed in the neural plate during neural tube closure with subsequent strong expression in the ventral neural tube and in facial mesenchyme.</text>
</comment>
<comment type="similarity">
    <text evidence="9">Belongs to the inturned family.</text>
</comment>
<reference evidence="9 10" key="1">
    <citation type="journal article" date="2006" name="Nat. Genet.">
        <title>Ciliogenesis defects in embryos lacking inturned or fuzzy function are associated with failure of planar cell polarity and Hedgehog signaling.</title>
        <authorList>
            <person name="Park T.J."/>
            <person name="Haigo S.L."/>
            <person name="Wallingford J.B."/>
        </authorList>
    </citation>
    <scope>NUCLEOTIDE SEQUENCE [MRNA]</scope>
    <scope>FUNCTION</scope>
    <scope>SUBCELLULAR LOCATION</scope>
    <scope>TISSUE SPECIFICITY</scope>
</reference>
<reference evidence="9" key="2">
    <citation type="journal article" date="2008" name="Nat. Genet.">
        <title>Dishevelled controls apical docking and planar polarization of basal bodies in ciliated epithelial cells.</title>
        <authorList>
            <person name="Park T.J."/>
            <person name="Mitchell B.J."/>
            <person name="Abitua P.B."/>
            <person name="Kintner C."/>
            <person name="Wallingford J.B."/>
        </authorList>
    </citation>
    <scope>FUNCTION</scope>
</reference>
<reference key="3">
    <citation type="journal article" date="2016" name="Nat. Genet.">
        <title>The ciliopathy-associated CPLANE proteins direct basal body recruitment of intraflagellar transport machinery.</title>
        <authorList>
            <person name="Toriyama M."/>
            <person name="Lee C."/>
            <person name="Taylor S.P."/>
            <person name="Duran I."/>
            <person name="Cohn D.H."/>
            <person name="Bruel A.L."/>
            <person name="Tabler J.M."/>
            <person name="Drew K."/>
            <person name="Kelly M.R."/>
            <person name="Kim S."/>
            <person name="Park T.J."/>
            <person name="Braun D.A."/>
            <person name="Pierquin G."/>
            <person name="Biver A."/>
            <person name="Wagner K."/>
            <person name="Malfroot A."/>
            <person name="Panigrahi I."/>
            <person name="Franco B."/>
            <person name="Al-Lami H.A."/>
            <person name="Yeung Y."/>
            <person name="Choi Y.J."/>
            <person name="Duffourd Y."/>
            <person name="Faivre L."/>
            <person name="Riviere J.B."/>
            <person name="Chen J."/>
            <person name="Liu K.J."/>
            <person name="Marcotte E.M."/>
            <person name="Hildebrandt F."/>
            <person name="Thauvin-Robinet C."/>
            <person name="Krakow D."/>
            <person name="Jackson P.K."/>
            <person name="Wallingford J.B."/>
        </authorList>
    </citation>
    <scope>FUNCTION</scope>
    <scope>SUBCELLULAR LOCATION</scope>
</reference>
<sequence length="951" mass="106835">MEHSRGDSVEAGEEEEGRGGWDSRSAGTFSSSCTDCSSYCSSDLEPEWLDRVQKNGELFYLELSEGEEEILLPLSPLEPVGVNHVRFSDNEAEILPEDRKNVRKNSEPRFRKLAKMLKKKNNKKGSAELNRQACPTSILKQNSRQKPGIIVHYQYRDTCLYVNPDHLPEDEHKKTSNLLQALIGIVHQSSRNSKRSERQGRQESNQRLSNQEKLVVHGFIPGSPAIRCGQVLIGDTLVAVNDVEVHVENIERVLSCIPGPMQLKLTFETPVLYSGMGLKNQNNQAQTSINDLASLVWGDEHTNSQQDLQHMPHIVMYLTLRLDSETSKEEQEILYQYPVSDASHKLKSIRGLFLTLGDMLQNVTGAPIVSSSLILNGELVHVSYWKENDKLFLISVPAQRFPLLQLKNVTADLVRTLKFMYSTLDRAFCQAENISRLDHFFSLFFQRVLRVFLLSGITGYGPQFYDACSSLLVENLPGVRWLSLPEDIKIQIDTVLSDLEALDFAELSEDYYEMRRLYMIIGTCIFYKGYLLSNHLPKEDLVDVVLYCRQYCLLALASERIGQLIIWREVYPRYHLKHCGSPATEECSEPGGRYFLLIVGLKHFMLCTLLEAGGCTSKATGNPGPDYIYVDQVKATLLQLEMLDLNLEERLGSAPNPCLSCADWFLPSARDKLGNFTSSIVLNKLQTPKRTTSPVSKRRLFAEAASSLRTRRPSPTRSSGGSDSGTDGAGESVGVITHSSPDMARKFGRRESLGSGGSDGSGGSGTLLKINKKKYSLPNPFSSASLRKNLSERETDDIYNTIKLTSGPENTLFHYLYFETLQGVFISPTHKEVEQLGGSIHPQLIKNFHRCCLSIRSVFQQALNKKNSKHSDSKACVDVAGFDPIKEHGVLFECSPENWNDQKKSPPTMSYWVVGRLFMHPQPQELYVCFHDSVTEISVELAFKLSFGIPL</sequence>